<name>SQASE_ECOLI</name>
<gene>
    <name evidence="6 10" type="primary">yihQ</name>
    <name type="synonym">squQ</name>
    <name type="ordered locus">b3878</name>
    <name type="ordered locus">JW3849</name>
</gene>
<reference key="1">
    <citation type="journal article" date="1993" name="Nucleic Acids Res.">
        <title>Analysis of the Escherichia coli genome. III. DNA sequence of the region from 87.2 to 89.2 minutes.</title>
        <authorList>
            <person name="Plunkett G. III"/>
            <person name="Burland V."/>
            <person name="Daniels D.L."/>
            <person name="Blattner F.R."/>
        </authorList>
    </citation>
    <scope>NUCLEOTIDE SEQUENCE [LARGE SCALE GENOMIC DNA]</scope>
    <source>
        <strain>K12 / MG1655 / ATCC 47076</strain>
    </source>
</reference>
<reference key="2">
    <citation type="journal article" date="1997" name="Science">
        <title>The complete genome sequence of Escherichia coli K-12.</title>
        <authorList>
            <person name="Blattner F.R."/>
            <person name="Plunkett G. III"/>
            <person name="Bloch C.A."/>
            <person name="Perna N.T."/>
            <person name="Burland V."/>
            <person name="Riley M."/>
            <person name="Collado-Vides J."/>
            <person name="Glasner J.D."/>
            <person name="Rode C.K."/>
            <person name="Mayhew G.F."/>
            <person name="Gregor J."/>
            <person name="Davis N.W."/>
            <person name="Kirkpatrick H.A."/>
            <person name="Goeden M.A."/>
            <person name="Rose D.J."/>
            <person name="Mau B."/>
            <person name="Shao Y."/>
        </authorList>
    </citation>
    <scope>NUCLEOTIDE SEQUENCE [LARGE SCALE GENOMIC DNA]</scope>
    <scope>SEQUENCE REVISION TO 358 AND 517</scope>
    <source>
        <strain>K12 / MG1655 / ATCC 47076</strain>
    </source>
</reference>
<reference key="3">
    <citation type="journal article" date="2006" name="Mol. Syst. Biol.">
        <title>Highly accurate genome sequences of Escherichia coli K-12 strains MG1655 and W3110.</title>
        <authorList>
            <person name="Hayashi K."/>
            <person name="Morooka N."/>
            <person name="Yamamoto Y."/>
            <person name="Fujita K."/>
            <person name="Isono K."/>
            <person name="Choi S."/>
            <person name="Ohtsubo E."/>
            <person name="Baba T."/>
            <person name="Wanner B.L."/>
            <person name="Mori H."/>
            <person name="Horiuchi T."/>
        </authorList>
    </citation>
    <scope>NUCLEOTIDE SEQUENCE [LARGE SCALE GENOMIC DNA]</scope>
    <source>
        <strain>K12 / W3110 / ATCC 27325 / DSM 5911</strain>
    </source>
</reference>
<reference key="4">
    <citation type="journal article" date="2004" name="Protein Expr. Purif.">
        <title>Overexpression and characterization of two unknown proteins, YicI and YihQ, originated from Escherichia coli.</title>
        <authorList>
            <person name="Okuyama M."/>
            <person name="Mori H."/>
            <person name="Chiba S."/>
            <person name="Kimura A."/>
        </authorList>
    </citation>
    <scope>FUNCTION</scope>
</reference>
<reference key="5">
    <citation type="journal article" date="2014" name="Nature">
        <title>Sulphoglycolysis in Escherichia coli K-12 closes a gap in the biogeochemical sulphur cycle.</title>
        <authorList>
            <person name="Denger K."/>
            <person name="Weiss M."/>
            <person name="Felux A.K."/>
            <person name="Schneider A."/>
            <person name="Mayer C."/>
            <person name="Spiteller D."/>
            <person name="Huhn T."/>
            <person name="Cook A.M."/>
            <person name="Schleheck D."/>
        </authorList>
    </citation>
    <scope>IDENTIFICATION BY MASS SPECTROMETRY</scope>
    <scope>INDUCTION</scope>
    <scope>PATHWAY</scope>
    <source>
        <strain>K12</strain>
    </source>
</reference>
<reference evidence="11 12 13" key="6">
    <citation type="journal article" date="2016" name="Nat. Chem. Biol.">
        <title>YihQ is a sulfoquinovosidase that cleaves sulfoquinovosyl diacylglyceride sulfolipids.</title>
        <authorList>
            <person name="Speciale G."/>
            <person name="Jin Y."/>
            <person name="Davies G.J."/>
            <person name="Williams S.J."/>
            <person name="Goddard-Borger E.D."/>
        </authorList>
    </citation>
    <scope>X-RAY CRYSTALLOGRAPHY (1.85 ANGSTROMS) OF WILD-TYPE AND MUTANT ASN-472 IN COMPLEXES WITH THE SUBSTRATE ANALOG 4-NITROPHENYL-ALPHA-D-SULFOQUINOVOSIDE AND THE INHIBITOR 5FIDOF</scope>
    <scope>FUNCTION</scope>
    <scope>CATALYTIC ACTIVITY</scope>
    <scope>BIOPHYSICOCHEMICAL PROPERTIES</scope>
    <scope>ACTIVITY REGULATION</scope>
    <scope>ACTIVE SITE</scope>
    <scope>REACTION MECHANISM</scope>
    <scope>MUTAGENESIS OF ARG-301; TRP-304; ASP-405 AND ASP-472</scope>
    <source>
        <strain>K12 / DH5-alpha</strain>
    </source>
</reference>
<reference evidence="14" key="7">
    <citation type="journal article" date="2018" name="ACS Cent. Sci.">
        <title>Structural and Biochemical Insights into the Function and Evolution of Sulfoquinovosidases.</title>
        <authorList>
            <person name="Abayakoon P."/>
            <person name="Jin Y."/>
            <person name="Lingford J.P."/>
            <person name="Petricevic M."/>
            <person name="John A."/>
            <person name="Ryan E."/>
            <person name="Wai-Ying Mui J."/>
            <person name="Pires D.E.V."/>
            <person name="Ascher D.B."/>
            <person name="Davies G.J."/>
            <person name="Goddard-Borger E.D."/>
            <person name="Williams S.J."/>
        </authorList>
    </citation>
    <scope>X-RAY CRYSTALLOGRAPHY (1.87 ANGSTROMS) IN COMPLEX WITH THE AZA-SUGAR INHIBITOR IFGSQ</scope>
    <scope>FUNCTION</scope>
    <scope>CATALYTIC ACTIVITY</scope>
    <scope>DOMAIN</scope>
    <scope>MUTAGENESIS OF GLN-262 AND GLN-288</scope>
    <source>
        <strain>K12 / BW25113</strain>
    </source>
</reference>
<sequence length="678" mass="77275">MDTPRPQLLDFQFHQNNDSFTLHFQQRLILTHSKDNPCLWIGSGIADIDMFRGNFSIKDKLQEKIALTDAIVSQSPDGWLIHFSRGSDISATLNISADDQGRLLLELQNDNLNHNRIWLRLAAQPEDHIYGCGEQFSYFDLRGKPFPLWTSEQGVGRNKQTYVTWQADCKENAGGDYYWTFFPQPTFVSTQKYYCHVDNSCYMNFDFSAPEYHELALWEDKATLRFECADTYISLLEKLTALLGRQPELPDWIYDGVTLGIQGGTEVCQKKLDTMRNAGVKVNGIWAQDWSGIRMTSFGKRVMWNWKWNSENYPQLDSRIKQWNQEGVQFLAYINPYVASDKDLCEEAAQHGYLAKDASGGDYLVEFGEFYGGVVDLTNPEAYAWFKEVIKKNMIELGCGGWMADFGEYLPTDTYLHNGVSAEIMHNAWPALWAKCNYEALEETGKLGEILFFMRAGSTGSQKYSTMMWAGDQNVDWSLDDGLASVVPAALSLAMTGHGLHHSDIGGYTTLFEMKRSKELLLRWCDFSAFTPMMRTHEGNRPGDNWQFDGDAETIAHFARMTTVFTTLKPYLKEAVALNAKSGLPVMRPLFLHYEDDAHTYTLKYQYLLGRDILVAPVHEEGRSDWTLYLPEDNWVHAWTGEAFRGGEVTVNAPIGKPPVFYRADSEWAALFASLKSI</sequence>
<feature type="chain" id="PRO_0000185372" description="Sulfoquinovosidase">
    <location>
        <begin position="1"/>
        <end position="678"/>
    </location>
</feature>
<feature type="active site" description="Nucleophile" evidence="4">
    <location>
        <position position="405"/>
    </location>
</feature>
<feature type="active site" evidence="1">
    <location>
        <position position="408"/>
    </location>
</feature>
<feature type="active site" description="Proton donor" evidence="9">
    <location>
        <position position="472"/>
    </location>
</feature>
<feature type="binding site" evidence="9 12">
    <location>
        <position position="288"/>
    </location>
    <ligand>
        <name>a 6-sulfo-alpha-D-quinovosyldiacylglycerol</name>
        <dbReference type="ChEBI" id="CHEBI:131487"/>
    </ligand>
</feature>
<feature type="binding site" evidence="9 12">
    <location>
        <position position="301"/>
    </location>
    <ligand>
        <name>a 6-sulfo-alpha-D-quinovosyldiacylglycerol</name>
        <dbReference type="ChEBI" id="CHEBI:131487"/>
    </ligand>
</feature>
<feature type="binding site" evidence="9 12">
    <location>
        <position position="302"/>
    </location>
    <ligand>
        <name>a 6-sulfo-alpha-D-quinovosyldiacylglycerol</name>
        <dbReference type="ChEBI" id="CHEBI:131487"/>
    </ligand>
</feature>
<feature type="binding site" evidence="9 12">
    <location>
        <position position="304"/>
    </location>
    <ligand>
        <name>a 6-sulfo-alpha-D-quinovosyldiacylglycerol</name>
        <dbReference type="ChEBI" id="CHEBI:131487"/>
    </ligand>
</feature>
<feature type="binding site" evidence="9 12">
    <location>
        <position position="537"/>
    </location>
    <ligand>
        <name>a 6-sulfo-alpha-D-quinovosyldiacylglycerol</name>
        <dbReference type="ChEBI" id="CHEBI:131487"/>
    </ligand>
</feature>
<feature type="mutagenesis site" description="2000-fold decrease in catalytic efficiency with PNPSQ as substrate. 100-fold decrease in catalytic efficiency with PNPSQ as substrate; when associated with E-288." evidence="5">
    <original>Q</original>
    <variation>K</variation>
    <location>
        <position position="262"/>
    </location>
</feature>
<feature type="mutagenesis site" description="500-fold decrease in catalytic efficiency with PNPSQ as substrate. 100-fold decrease in catalytic efficiency with PNPSQ as substrate; when associated with K-262. Loses activity against PNPSQ, but in contrast to wild-type, possesses a very weak alpha-glucosidase activity against para-nitrophenyl alpha-D-glucopyranoside." evidence="4 5">
    <original>Q</original>
    <variation>E</variation>
    <location>
        <position position="288"/>
    </location>
</feature>
<feature type="mutagenesis site" description="Loss of catalytic activity." evidence="4">
    <original>R</original>
    <variation>A</variation>
    <variation>E</variation>
    <location>
        <position position="301"/>
    </location>
</feature>
<feature type="mutagenesis site" description="Almost complete loss of catalytic activity." evidence="4">
    <original>R</original>
    <variation>K</variation>
    <location>
        <position position="301"/>
    </location>
</feature>
<feature type="mutagenesis site" description="13-fold decrease in substrate affinity and 4600-fold decrease in catalytic activity." evidence="4">
    <original>R</original>
    <variation>Q</variation>
    <location>
        <position position="301"/>
    </location>
</feature>
<feature type="mutagenesis site" description="Loss of catalytic activity." evidence="4">
    <original>W</original>
    <variation>F</variation>
    <location>
        <position position="304"/>
    </location>
</feature>
<feature type="mutagenesis site" description="Loss of catalytic activity." evidence="4">
    <original>D</original>
    <variation>A</variation>
    <variation>N</variation>
    <location>
        <position position="405"/>
    </location>
</feature>
<feature type="mutagenesis site" description="Loss of catalytic activity." evidence="4">
    <original>D</original>
    <variation>A</variation>
    <variation>N</variation>
    <location>
        <position position="472"/>
    </location>
</feature>
<feature type="sequence conflict" description="In Ref. 1; AAB03011." evidence="7" ref="1">
    <original>A</original>
    <variation>R</variation>
    <location>
        <position position="358"/>
    </location>
</feature>
<feature type="sequence conflict" description="In Ref. 1; AAB03011." evidence="7" ref="1">
    <original>S</original>
    <variation>T</variation>
    <location>
        <position position="517"/>
    </location>
</feature>
<feature type="strand" evidence="16">
    <location>
        <begin position="9"/>
        <end position="12"/>
    </location>
</feature>
<feature type="strand" evidence="15">
    <location>
        <begin position="13"/>
        <end position="16"/>
    </location>
</feature>
<feature type="strand" evidence="15">
    <location>
        <begin position="19"/>
        <end position="24"/>
    </location>
</feature>
<feature type="strand" evidence="15">
    <location>
        <begin position="27"/>
        <end position="32"/>
    </location>
</feature>
<feature type="strand" evidence="15">
    <location>
        <begin position="34"/>
        <end position="36"/>
    </location>
</feature>
<feature type="strand" evidence="15">
    <location>
        <begin position="38"/>
        <end position="51"/>
    </location>
</feature>
<feature type="strand" evidence="15">
    <location>
        <begin position="54"/>
        <end position="66"/>
    </location>
</feature>
<feature type="strand" evidence="15">
    <location>
        <begin position="69"/>
        <end position="75"/>
    </location>
</feature>
<feature type="strand" evidence="15">
    <location>
        <begin position="78"/>
        <end position="86"/>
    </location>
</feature>
<feature type="strand" evidence="15">
    <location>
        <begin position="89"/>
        <end position="97"/>
    </location>
</feature>
<feature type="strand" evidence="15">
    <location>
        <begin position="103"/>
        <end position="111"/>
    </location>
</feature>
<feature type="strand" evidence="15">
    <location>
        <begin position="116"/>
        <end position="122"/>
    </location>
</feature>
<feature type="strand" evidence="15">
    <location>
        <begin position="129"/>
        <end position="133"/>
    </location>
</feature>
<feature type="strand" evidence="15">
    <location>
        <begin position="144"/>
        <end position="148"/>
    </location>
</feature>
<feature type="helix" evidence="15">
    <location>
        <begin position="162"/>
        <end position="171"/>
    </location>
</feature>
<feature type="strand" evidence="15">
    <location>
        <begin position="183"/>
        <end position="189"/>
    </location>
</feature>
<feature type="turn" evidence="15">
    <location>
        <begin position="190"/>
        <end position="192"/>
    </location>
</feature>
<feature type="strand" evidence="15">
    <location>
        <begin position="193"/>
        <end position="197"/>
    </location>
</feature>
<feature type="strand" evidence="15">
    <location>
        <begin position="203"/>
        <end position="209"/>
    </location>
</feature>
<feature type="strand" evidence="15">
    <location>
        <begin position="212"/>
        <end position="228"/>
    </location>
</feature>
<feature type="helix" evidence="15">
    <location>
        <begin position="232"/>
        <end position="243"/>
    </location>
</feature>
<feature type="helix" evidence="15">
    <location>
        <begin position="251"/>
        <end position="255"/>
    </location>
</feature>
<feature type="strand" evidence="15">
    <location>
        <begin position="256"/>
        <end position="260"/>
    </location>
</feature>
<feature type="helix" evidence="15">
    <location>
        <begin position="265"/>
        <end position="277"/>
    </location>
</feature>
<feature type="strand" evidence="15">
    <location>
        <begin position="282"/>
        <end position="286"/>
    </location>
</feature>
<feature type="helix" evidence="15">
    <location>
        <begin position="288"/>
        <end position="291"/>
    </location>
</feature>
<feature type="strand" evidence="15">
    <location>
        <begin position="293"/>
        <end position="295"/>
    </location>
</feature>
<feature type="strand" evidence="15">
    <location>
        <begin position="300"/>
        <end position="302"/>
    </location>
</feature>
<feature type="turn" evidence="15">
    <location>
        <begin position="310"/>
        <end position="312"/>
    </location>
</feature>
<feature type="helix" evidence="15">
    <location>
        <begin position="316"/>
        <end position="325"/>
    </location>
</feature>
<feature type="strand" evidence="15">
    <location>
        <begin position="329"/>
        <end position="334"/>
    </location>
</feature>
<feature type="strand" evidence="15">
    <location>
        <begin position="336"/>
        <end position="339"/>
    </location>
</feature>
<feature type="helix" evidence="15">
    <location>
        <begin position="343"/>
        <end position="351"/>
    </location>
</feature>
<feature type="strand" evidence="15">
    <location>
        <begin position="360"/>
        <end position="362"/>
    </location>
</feature>
<feature type="strand" evidence="16">
    <location>
        <begin position="364"/>
        <end position="367"/>
    </location>
</feature>
<feature type="strand" evidence="15">
    <location>
        <begin position="368"/>
        <end position="375"/>
    </location>
</feature>
<feature type="helix" evidence="15">
    <location>
        <begin position="380"/>
        <end position="393"/>
    </location>
</feature>
<feature type="turn" evidence="15">
    <location>
        <begin position="394"/>
        <end position="398"/>
    </location>
</feature>
<feature type="strand" evidence="15">
    <location>
        <begin position="400"/>
        <end position="404"/>
    </location>
</feature>
<feature type="helix" evidence="15">
    <location>
        <begin position="422"/>
        <end position="443"/>
    </location>
</feature>
<feature type="turn" evidence="15">
    <location>
        <begin position="447"/>
        <end position="449"/>
    </location>
</feature>
<feature type="strand" evidence="15">
    <location>
        <begin position="451"/>
        <end position="455"/>
    </location>
</feature>
<feature type="helix" evidence="15">
    <location>
        <begin position="461"/>
        <end position="464"/>
    </location>
</feature>
<feature type="strand" evidence="15">
    <location>
        <begin position="474"/>
        <end position="476"/>
    </location>
</feature>
<feature type="turn" evidence="15">
    <location>
        <begin position="479"/>
        <end position="481"/>
    </location>
</feature>
<feature type="helix" evidence="15">
    <location>
        <begin position="483"/>
        <end position="485"/>
    </location>
</feature>
<feature type="helix" evidence="15">
    <location>
        <begin position="486"/>
        <end position="495"/>
    </location>
</feature>
<feature type="helix" evidence="15">
    <location>
        <begin position="518"/>
        <end position="528"/>
    </location>
</feature>
<feature type="strand" evidence="15">
    <location>
        <begin position="534"/>
        <end position="536"/>
    </location>
</feature>
<feature type="helix" evidence="15">
    <location>
        <begin position="542"/>
        <end position="544"/>
    </location>
</feature>
<feature type="helix" evidence="15">
    <location>
        <begin position="552"/>
        <end position="567"/>
    </location>
</feature>
<feature type="helix" evidence="15">
    <location>
        <begin position="569"/>
        <end position="582"/>
    </location>
</feature>
<feature type="strand" evidence="15">
    <location>
        <begin position="586"/>
        <end position="588"/>
    </location>
</feature>
<feature type="helix" evidence="15">
    <location>
        <begin position="590"/>
        <end position="592"/>
    </location>
</feature>
<feature type="helix" evidence="15">
    <location>
        <begin position="598"/>
        <end position="602"/>
    </location>
</feature>
<feature type="strand" evidence="15">
    <location>
        <begin position="607"/>
        <end position="609"/>
    </location>
</feature>
<feature type="turn" evidence="15">
    <location>
        <begin position="610"/>
        <end position="612"/>
    </location>
</feature>
<feature type="strand" evidence="15">
    <location>
        <begin position="613"/>
        <end position="615"/>
    </location>
</feature>
<feature type="strand" evidence="15">
    <location>
        <begin position="624"/>
        <end position="630"/>
    </location>
</feature>
<feature type="strand" evidence="15">
    <location>
        <begin position="635"/>
        <end position="637"/>
    </location>
</feature>
<feature type="turn" evidence="15">
    <location>
        <begin position="638"/>
        <end position="640"/>
    </location>
</feature>
<feature type="strand" evidence="15">
    <location>
        <begin position="646"/>
        <end position="652"/>
    </location>
</feature>
<feature type="strand" evidence="15">
    <location>
        <begin position="659"/>
        <end position="663"/>
    </location>
</feature>
<feature type="helix" evidence="15">
    <location>
        <begin position="669"/>
        <end position="673"/>
    </location>
</feature>
<feature type="helix" evidence="15">
    <location>
        <begin position="674"/>
        <end position="677"/>
    </location>
</feature>
<evidence type="ECO:0000250" key="1">
    <source>
        <dbReference type="UniProtKB" id="P31434"/>
    </source>
</evidence>
<evidence type="ECO:0000269" key="2">
    <source>
    </source>
</evidence>
<evidence type="ECO:0000269" key="3">
    <source>
    </source>
</evidence>
<evidence type="ECO:0000269" key="4">
    <source>
    </source>
</evidence>
<evidence type="ECO:0000269" key="5">
    <source>
    </source>
</evidence>
<evidence type="ECO:0000303" key="6">
    <source>
    </source>
</evidence>
<evidence type="ECO:0000305" key="7"/>
<evidence type="ECO:0000305" key="8">
    <source>
    </source>
</evidence>
<evidence type="ECO:0000305" key="9">
    <source>
    </source>
</evidence>
<evidence type="ECO:0000312" key="10">
    <source>
        <dbReference type="EMBL" id="AAC76875.1"/>
    </source>
</evidence>
<evidence type="ECO:0007744" key="11">
    <source>
        <dbReference type="PDB" id="5AED"/>
    </source>
</evidence>
<evidence type="ECO:0007744" key="12">
    <source>
        <dbReference type="PDB" id="5AEE"/>
    </source>
</evidence>
<evidence type="ECO:0007744" key="13">
    <source>
        <dbReference type="PDB" id="5AEG"/>
    </source>
</evidence>
<evidence type="ECO:0007744" key="14">
    <source>
        <dbReference type="PDB" id="5OHT"/>
    </source>
</evidence>
<evidence type="ECO:0007829" key="15">
    <source>
        <dbReference type="PDB" id="5AEE"/>
    </source>
</evidence>
<evidence type="ECO:0007829" key="16">
    <source>
        <dbReference type="PDB" id="5AEG"/>
    </source>
</evidence>
<proteinExistence type="evidence at protein level"/>
<accession>P32138</accession>
<accession>P76775</accession>
<accession>Q2M8H5</accession>
<comment type="function">
    <text evidence="2 4 5">Catalyzes the hydrolysis of sulfoquinovosyl diacylglycerides (SQDG) to sulfoquinovose (SQ), which is then degraded by E.coli through the SQ Embden-Meyerhof-Parnas (SQ-EMP) sulfoglycolysis pathway as a source of carbon and sulfur. Therefore, is likely involved in the utilization of the sulfoquinovose headgroup found in ubiquitous plant sulfolipids (PubMed:26878550). Is also able to hydrolyze simple sulfoquinovosides such as sulfoquinovosyl glycerol (SQGro) (PubMed:26878550, PubMed:30276262). In vitro, can use the substrate analog para-nitrophenyl alpha-sulfoquinovoside (PNPSQ), but shows no detectable activity toward 4-nitrophenyl alpha-D-glucopyranoside (PNPGlc) (PubMed:26878550, PubMed:30276262). Is a retaining glycoside hydrolase, since it forms the alpha anomer of SQ (PubMed:26878550). Also exhibits some alpha-glucosidase activity against alpha-glucosyl fluoride in vitro, although natural substrates, such as alpha-glucobioses are scarcely hydrolyzed (PubMed:15294295).</text>
</comment>
<comment type="catalytic activity">
    <reaction evidence="4">
        <text>a 6-sulfo-alpha-D-quinovosyldiacylglycerol + H2O = 6-sulfo-alpha-D-quinovose + a 1,2-diacyl-sn-glycerol</text>
        <dbReference type="Rhea" id="RHEA:49452"/>
        <dbReference type="ChEBI" id="CHEBI:15377"/>
        <dbReference type="ChEBI" id="CHEBI:17815"/>
        <dbReference type="ChEBI" id="CHEBI:131487"/>
        <dbReference type="ChEBI" id="CHEBI:142956"/>
        <dbReference type="EC" id="3.2.1.199"/>
    </reaction>
</comment>
<comment type="catalytic activity">
    <reaction evidence="4 5">
        <text>3-(6-sulfo-alpha-D-quinovosyl)glycerol + H2O = 6-sulfo-alpha-D-quinovose + glycerol</text>
        <dbReference type="Rhea" id="RHEA:70727"/>
        <dbReference type="ChEBI" id="CHEBI:15377"/>
        <dbReference type="ChEBI" id="CHEBI:17754"/>
        <dbReference type="ChEBI" id="CHEBI:142956"/>
        <dbReference type="ChEBI" id="CHEBI:190012"/>
    </reaction>
</comment>
<comment type="activity regulation">
    <text evidence="4">Is inactivated in vitro by the mechanism-based inactivator 5-fluoro-beta-L-idopyranosyl fluoride (5FIdoF) that yields a covalent glycosyl-enzyme complex with the active site nucleophile Asp-405.</text>
</comment>
<comment type="biophysicochemical properties">
    <kinetics>
        <KM evidence="4">0.22 mM for para-nitrophenyl alpha-sulfoquinovoside</KM>
        <text evidence="4">kcat is 14.3 sec(-1) with para-nitrophenyl alpha-sulfoquinovoside as substrate.</text>
    </kinetics>
    <phDependence>
        <text evidence="4">Optimum pH is 6.</text>
    </phDependence>
</comment>
<comment type="pathway">
    <text evidence="8">Glycolipid metabolism.</text>
</comment>
<comment type="induction">
    <text evidence="3">Induced during growth with sulfoquinovose.</text>
</comment>
<comment type="domain">
    <text evidence="5">Structural analysis revealed the molecular coevolution of catalytically important amino acid pairs directly involved in substrate recognition, as well as structurally important pairs distal to the active site.</text>
</comment>
<comment type="similarity">
    <text evidence="7">Belongs to the glycosyl hydrolase 31 family.</text>
</comment>
<keyword id="KW-0002">3D-structure</keyword>
<keyword id="KW-0326">Glycosidase</keyword>
<keyword id="KW-0378">Hydrolase</keyword>
<keyword id="KW-1185">Reference proteome</keyword>
<protein>
    <recommendedName>
        <fullName evidence="6">Sulfoquinovosidase</fullName>
        <shortName evidence="6">SQase</shortName>
        <ecNumber evidence="4">3.2.1.199</ecNumber>
    </recommendedName>
</protein>
<dbReference type="EC" id="3.2.1.199" evidence="4"/>
<dbReference type="EMBL" id="L19201">
    <property type="protein sequence ID" value="AAB03011.1"/>
    <property type="molecule type" value="Genomic_DNA"/>
</dbReference>
<dbReference type="EMBL" id="U00096">
    <property type="protein sequence ID" value="AAC76875.1"/>
    <property type="molecule type" value="Genomic_DNA"/>
</dbReference>
<dbReference type="EMBL" id="AP009048">
    <property type="protein sequence ID" value="BAE77431.1"/>
    <property type="molecule type" value="Genomic_DNA"/>
</dbReference>
<dbReference type="PIR" id="A65193">
    <property type="entry name" value="A65193"/>
</dbReference>
<dbReference type="RefSeq" id="NP_418314.1">
    <property type="nucleotide sequence ID" value="NC_000913.3"/>
</dbReference>
<dbReference type="RefSeq" id="WP_000380843.1">
    <property type="nucleotide sequence ID" value="NZ_LN832404.1"/>
</dbReference>
<dbReference type="PDB" id="5AED">
    <property type="method" value="X-ray"/>
    <property type="resolution" value="1.91 A"/>
    <property type="chains" value="A/B=1-678"/>
</dbReference>
<dbReference type="PDB" id="5AEE">
    <property type="method" value="X-ray"/>
    <property type="resolution" value="1.85 A"/>
    <property type="chains" value="A/B=1-678"/>
</dbReference>
<dbReference type="PDB" id="5AEG">
    <property type="method" value="X-ray"/>
    <property type="resolution" value="1.85 A"/>
    <property type="chains" value="A/B=1-678"/>
</dbReference>
<dbReference type="PDB" id="5OHT">
    <property type="method" value="X-ray"/>
    <property type="resolution" value="1.87 A"/>
    <property type="chains" value="A/B=1-678"/>
</dbReference>
<dbReference type="PDBsum" id="5AED"/>
<dbReference type="PDBsum" id="5AEE"/>
<dbReference type="PDBsum" id="5AEG"/>
<dbReference type="PDBsum" id="5OHT"/>
<dbReference type="SMR" id="P32138"/>
<dbReference type="BioGRID" id="4260866">
    <property type="interactions" value="11"/>
</dbReference>
<dbReference type="DIP" id="DIP-12498N"/>
<dbReference type="FunCoup" id="P32138">
    <property type="interactions" value="219"/>
</dbReference>
<dbReference type="IntAct" id="P32138">
    <property type="interactions" value="1"/>
</dbReference>
<dbReference type="STRING" id="511145.b3878"/>
<dbReference type="CAZy" id="GH31">
    <property type="family name" value="Glycoside Hydrolase Family 31"/>
</dbReference>
<dbReference type="PaxDb" id="511145-b3878"/>
<dbReference type="EnsemblBacteria" id="AAC76875">
    <property type="protein sequence ID" value="AAC76875"/>
    <property type="gene ID" value="b3878"/>
</dbReference>
<dbReference type="GeneID" id="948376"/>
<dbReference type="KEGG" id="ecj:JW3849"/>
<dbReference type="KEGG" id="eco:b3878"/>
<dbReference type="KEGG" id="ecoc:C3026_20965"/>
<dbReference type="PATRIC" id="fig|1411691.4.peg.2833"/>
<dbReference type="EchoBASE" id="EB1789"/>
<dbReference type="eggNOG" id="COG1501">
    <property type="taxonomic scope" value="Bacteria"/>
</dbReference>
<dbReference type="HOGENOM" id="CLU_017110_0_1_6"/>
<dbReference type="InParanoid" id="P32138"/>
<dbReference type="OMA" id="FMTDFGE"/>
<dbReference type="OrthoDB" id="176168at2"/>
<dbReference type="PhylomeDB" id="P32138"/>
<dbReference type="BioCyc" id="EcoCyc:EG11843-MONOMER"/>
<dbReference type="BioCyc" id="MetaCyc:EG11843-MONOMER"/>
<dbReference type="BRENDA" id="3.2.1.199">
    <property type="organism ID" value="2026"/>
</dbReference>
<dbReference type="SABIO-RK" id="P32138"/>
<dbReference type="EvolutionaryTrace" id="P32138"/>
<dbReference type="PRO" id="PR:P32138"/>
<dbReference type="Proteomes" id="UP000000625">
    <property type="component" value="Chromosome"/>
</dbReference>
<dbReference type="GO" id="GO:0030246">
    <property type="term" value="F:carbohydrate binding"/>
    <property type="evidence" value="ECO:0007669"/>
    <property type="project" value="InterPro"/>
</dbReference>
<dbReference type="GO" id="GO:0004553">
    <property type="term" value="F:hydrolase activity, hydrolyzing O-glycosyl compounds"/>
    <property type="evidence" value="ECO:0007669"/>
    <property type="project" value="InterPro"/>
</dbReference>
<dbReference type="GO" id="GO:1990929">
    <property type="term" value="F:sulfoquinovosidase activity"/>
    <property type="evidence" value="ECO:0000314"/>
    <property type="project" value="EcoCyc"/>
</dbReference>
<dbReference type="GO" id="GO:0061720">
    <property type="term" value="P:6-sulfoquinovose(1-) catabolic process to glycerone phosphate and 3-sulfolactaldehyde"/>
    <property type="evidence" value="ECO:0000314"/>
    <property type="project" value="EcoCyc"/>
</dbReference>
<dbReference type="GO" id="GO:0005975">
    <property type="term" value="P:carbohydrate metabolic process"/>
    <property type="evidence" value="ECO:0007669"/>
    <property type="project" value="InterPro"/>
</dbReference>
<dbReference type="CDD" id="cd06594">
    <property type="entry name" value="GH31_glucosidase_YihQ"/>
    <property type="match status" value="1"/>
</dbReference>
<dbReference type="CDD" id="cd14752">
    <property type="entry name" value="GH31_N"/>
    <property type="match status" value="1"/>
</dbReference>
<dbReference type="FunFam" id="3.20.20.80:FF:000088">
    <property type="entry name" value="Alpha-glucosidase yihQ"/>
    <property type="match status" value="1"/>
</dbReference>
<dbReference type="Gene3D" id="3.20.20.80">
    <property type="entry name" value="Glycosidases"/>
    <property type="match status" value="1"/>
</dbReference>
<dbReference type="Gene3D" id="2.60.40.1760">
    <property type="entry name" value="glycosyl hydrolase (family 31)"/>
    <property type="match status" value="1"/>
</dbReference>
<dbReference type="Gene3D" id="2.60.40.1180">
    <property type="entry name" value="Golgi alpha-mannosidase II"/>
    <property type="match status" value="1"/>
</dbReference>
<dbReference type="InterPro" id="IPR011013">
    <property type="entry name" value="Gal_mutarotase_sf_dom"/>
</dbReference>
<dbReference type="InterPro" id="IPR048395">
    <property type="entry name" value="Glyco_hydro_31_C"/>
</dbReference>
<dbReference type="InterPro" id="IPR025887">
    <property type="entry name" value="Glyco_hydro_31_N_dom"/>
</dbReference>
<dbReference type="InterPro" id="IPR000322">
    <property type="entry name" value="Glyco_hydro_31_TIM"/>
</dbReference>
<dbReference type="InterPro" id="IPR013780">
    <property type="entry name" value="Glyco_hydro_b"/>
</dbReference>
<dbReference type="InterPro" id="IPR017853">
    <property type="entry name" value="Glycoside_hydrolase_SF"/>
</dbReference>
<dbReference type="InterPro" id="IPR052990">
    <property type="entry name" value="Sulfoquinovosidase_GH31"/>
</dbReference>
<dbReference type="InterPro" id="IPR044112">
    <property type="entry name" value="YihQ_TIM-like"/>
</dbReference>
<dbReference type="NCBIfam" id="NF007746">
    <property type="entry name" value="PRK10426.1"/>
    <property type="match status" value="1"/>
</dbReference>
<dbReference type="PANTHER" id="PTHR46959">
    <property type="entry name" value="SULFOQUINOVOSIDASE"/>
    <property type="match status" value="1"/>
</dbReference>
<dbReference type="PANTHER" id="PTHR46959:SF2">
    <property type="entry name" value="SULFOQUINOVOSIDASE"/>
    <property type="match status" value="1"/>
</dbReference>
<dbReference type="Pfam" id="PF13802">
    <property type="entry name" value="Gal_mutarotas_2"/>
    <property type="match status" value="1"/>
</dbReference>
<dbReference type="Pfam" id="PF01055">
    <property type="entry name" value="Glyco_hydro_31_2nd"/>
    <property type="match status" value="1"/>
</dbReference>
<dbReference type="Pfam" id="PF21365">
    <property type="entry name" value="Glyco_hydro_31_3rd"/>
    <property type="match status" value="1"/>
</dbReference>
<dbReference type="SUPFAM" id="SSF51445">
    <property type="entry name" value="(Trans)glycosidases"/>
    <property type="match status" value="1"/>
</dbReference>
<dbReference type="SUPFAM" id="SSF74650">
    <property type="entry name" value="Galactose mutarotase-like"/>
    <property type="match status" value="1"/>
</dbReference>
<dbReference type="SUPFAM" id="SSF51011">
    <property type="entry name" value="Glycosyl hydrolase domain"/>
    <property type="match status" value="1"/>
</dbReference>
<organism>
    <name type="scientific">Escherichia coli (strain K12)</name>
    <dbReference type="NCBI Taxonomy" id="83333"/>
    <lineage>
        <taxon>Bacteria</taxon>
        <taxon>Pseudomonadati</taxon>
        <taxon>Pseudomonadota</taxon>
        <taxon>Gammaproteobacteria</taxon>
        <taxon>Enterobacterales</taxon>
        <taxon>Enterobacteriaceae</taxon>
        <taxon>Escherichia</taxon>
    </lineage>
</organism>